<reference key="1">
    <citation type="journal article" date="2009" name="Proc. Natl. Acad. Sci. U.S.A.">
        <title>Hamiltonella defensa, genome evolution of protective bacterial endosymbiont from pathogenic ancestors.</title>
        <authorList>
            <person name="Degnan P.H."/>
            <person name="Yu Y."/>
            <person name="Sisneros N."/>
            <person name="Wing R.A."/>
            <person name="Moran N.A."/>
        </authorList>
    </citation>
    <scope>NUCLEOTIDE SEQUENCE [LARGE SCALE GENOMIC DNA]</scope>
    <source>
        <strain>5AT</strain>
    </source>
</reference>
<feature type="chain" id="PRO_1000202244" description="Elongation factor Ts">
    <location>
        <begin position="1"/>
        <end position="286"/>
    </location>
</feature>
<feature type="region of interest" description="Involved in Mg(2+) ion dislocation from EF-Tu" evidence="1">
    <location>
        <begin position="82"/>
        <end position="85"/>
    </location>
</feature>
<name>EFTS_HAMD5</name>
<sequence>MAHISATLVKELRERTGAGMMECKKALVDTQGDVELAIDNMRKSGQAKAAKKSGRVASEGVILLEISSEQKLGAILELNCETDFVAKDASFKSFAEEIISTALKEKITSSELLKAKFEEQRTALVAKIGENINIRRIAMLESEALGSYLHGARIGVLVSAVGADQKCLKNLAMHIAASKPEYVNSEDVPSEVVNREHQVQLDIAMQSGKPRDIAEKMVSGRMKKFTGEISLTGQNFVMEPTKTVGDWLEEHGATVLNFIRFEVGEGIEKSTTNFADEVAAISKKEV</sequence>
<keyword id="KW-0963">Cytoplasm</keyword>
<keyword id="KW-0251">Elongation factor</keyword>
<keyword id="KW-0648">Protein biosynthesis</keyword>
<protein>
    <recommendedName>
        <fullName evidence="1">Elongation factor Ts</fullName>
        <shortName evidence="1">EF-Ts</shortName>
    </recommendedName>
</protein>
<organism>
    <name type="scientific">Hamiltonella defensa subsp. Acyrthosiphon pisum (strain 5AT)</name>
    <dbReference type="NCBI Taxonomy" id="572265"/>
    <lineage>
        <taxon>Bacteria</taxon>
        <taxon>Pseudomonadati</taxon>
        <taxon>Pseudomonadota</taxon>
        <taxon>Gammaproteobacteria</taxon>
        <taxon>Enterobacterales</taxon>
        <taxon>Enterobacteriaceae</taxon>
        <taxon>aphid secondary symbionts</taxon>
        <taxon>Candidatus Hamiltonella</taxon>
    </lineage>
</organism>
<gene>
    <name evidence="1" type="primary">tsf</name>
    <name type="ordered locus">HDEF_1311</name>
</gene>
<proteinExistence type="inferred from homology"/>
<dbReference type="EMBL" id="CP001277">
    <property type="protein sequence ID" value="ACQ67961.1"/>
    <property type="molecule type" value="Genomic_DNA"/>
</dbReference>
<dbReference type="RefSeq" id="WP_015873750.1">
    <property type="nucleotide sequence ID" value="NC_012751.1"/>
</dbReference>
<dbReference type="SMR" id="C4K5W8"/>
<dbReference type="STRING" id="572265.HDEF_1311"/>
<dbReference type="GeneID" id="66261005"/>
<dbReference type="KEGG" id="hde:HDEF_1311"/>
<dbReference type="eggNOG" id="COG0264">
    <property type="taxonomic scope" value="Bacteria"/>
</dbReference>
<dbReference type="HOGENOM" id="CLU_047155_0_2_6"/>
<dbReference type="Proteomes" id="UP000002334">
    <property type="component" value="Chromosome"/>
</dbReference>
<dbReference type="GO" id="GO:0005737">
    <property type="term" value="C:cytoplasm"/>
    <property type="evidence" value="ECO:0007669"/>
    <property type="project" value="UniProtKB-SubCell"/>
</dbReference>
<dbReference type="GO" id="GO:0003746">
    <property type="term" value="F:translation elongation factor activity"/>
    <property type="evidence" value="ECO:0007669"/>
    <property type="project" value="UniProtKB-UniRule"/>
</dbReference>
<dbReference type="CDD" id="cd14275">
    <property type="entry name" value="UBA_EF-Ts"/>
    <property type="match status" value="1"/>
</dbReference>
<dbReference type="FunFam" id="1.10.286.20:FF:000001">
    <property type="entry name" value="Elongation factor Ts"/>
    <property type="match status" value="1"/>
</dbReference>
<dbReference type="FunFam" id="1.10.8.10:FF:000001">
    <property type="entry name" value="Elongation factor Ts"/>
    <property type="match status" value="1"/>
</dbReference>
<dbReference type="FunFam" id="3.30.479.20:FF:000001">
    <property type="entry name" value="Elongation factor Ts"/>
    <property type="match status" value="1"/>
</dbReference>
<dbReference type="Gene3D" id="1.10.286.20">
    <property type="match status" value="1"/>
</dbReference>
<dbReference type="Gene3D" id="1.10.8.10">
    <property type="entry name" value="DNA helicase RuvA subunit, C-terminal domain"/>
    <property type="match status" value="1"/>
</dbReference>
<dbReference type="Gene3D" id="3.30.479.20">
    <property type="entry name" value="Elongation factor Ts, dimerisation domain"/>
    <property type="match status" value="2"/>
</dbReference>
<dbReference type="HAMAP" id="MF_00050">
    <property type="entry name" value="EF_Ts"/>
    <property type="match status" value="1"/>
</dbReference>
<dbReference type="InterPro" id="IPR036402">
    <property type="entry name" value="EF-Ts_dimer_sf"/>
</dbReference>
<dbReference type="InterPro" id="IPR001816">
    <property type="entry name" value="Transl_elong_EFTs/EF1B"/>
</dbReference>
<dbReference type="InterPro" id="IPR014039">
    <property type="entry name" value="Transl_elong_EFTs/EF1B_dimer"/>
</dbReference>
<dbReference type="InterPro" id="IPR018101">
    <property type="entry name" value="Transl_elong_Ts_CS"/>
</dbReference>
<dbReference type="InterPro" id="IPR009060">
    <property type="entry name" value="UBA-like_sf"/>
</dbReference>
<dbReference type="NCBIfam" id="TIGR00116">
    <property type="entry name" value="tsf"/>
    <property type="match status" value="1"/>
</dbReference>
<dbReference type="PANTHER" id="PTHR11741">
    <property type="entry name" value="ELONGATION FACTOR TS"/>
    <property type="match status" value="1"/>
</dbReference>
<dbReference type="PANTHER" id="PTHR11741:SF0">
    <property type="entry name" value="ELONGATION FACTOR TS, MITOCHONDRIAL"/>
    <property type="match status" value="1"/>
</dbReference>
<dbReference type="Pfam" id="PF00889">
    <property type="entry name" value="EF_TS"/>
    <property type="match status" value="1"/>
</dbReference>
<dbReference type="SUPFAM" id="SSF54713">
    <property type="entry name" value="Elongation factor Ts (EF-Ts), dimerisation domain"/>
    <property type="match status" value="2"/>
</dbReference>
<dbReference type="SUPFAM" id="SSF46934">
    <property type="entry name" value="UBA-like"/>
    <property type="match status" value="1"/>
</dbReference>
<dbReference type="PROSITE" id="PS01126">
    <property type="entry name" value="EF_TS_1"/>
    <property type="match status" value="1"/>
</dbReference>
<dbReference type="PROSITE" id="PS01127">
    <property type="entry name" value="EF_TS_2"/>
    <property type="match status" value="1"/>
</dbReference>
<comment type="function">
    <text evidence="1">Associates with the EF-Tu.GDP complex and induces the exchange of GDP to GTP. It remains bound to the aminoacyl-tRNA.EF-Tu.GTP complex up to the GTP hydrolysis stage on the ribosome.</text>
</comment>
<comment type="subcellular location">
    <subcellularLocation>
        <location evidence="1">Cytoplasm</location>
    </subcellularLocation>
</comment>
<comment type="similarity">
    <text evidence="1">Belongs to the EF-Ts family.</text>
</comment>
<evidence type="ECO:0000255" key="1">
    <source>
        <dbReference type="HAMAP-Rule" id="MF_00050"/>
    </source>
</evidence>
<accession>C4K5W8</accession>